<feature type="signal peptide" evidence="2">
    <location>
        <begin position="1"/>
        <end position="22"/>
    </location>
</feature>
<feature type="chain" id="PRO_0000002308" description="Mesencephalic astrocyte-derived neurotrophic factor homolog">
    <location>
        <begin position="23"/>
        <end position="173"/>
    </location>
</feature>
<feature type="disulfide bond" evidence="1">
    <location>
        <begin position="28"/>
        <end position="114"/>
    </location>
</feature>
<feature type="disulfide bond" evidence="1">
    <location>
        <begin position="31"/>
        <end position="103"/>
    </location>
</feature>
<feature type="disulfide bond" evidence="1">
    <location>
        <begin position="61"/>
        <end position="72"/>
    </location>
</feature>
<feature type="disulfide bond" evidence="1">
    <location>
        <begin position="148"/>
        <end position="151"/>
    </location>
</feature>
<feature type="sequence conflict" description="In Ref. 1; AAD32615." evidence="4" ref="1">
    <location>
        <position position="74"/>
    </location>
</feature>
<name>ARMET_DROME</name>
<gene>
    <name type="primary">Manf</name>
    <name type="synonym">ARP-like</name>
    <name type="ORF">CG7013</name>
</gene>
<accession>Q9XZ63</accession>
<accession>Q9VEW4</accession>
<protein>
    <recommendedName>
        <fullName>Mesencephalic astrocyte-derived neurotrophic factor homolog</fullName>
        <shortName>DmMANF</shortName>
    </recommendedName>
    <alternativeName>
        <fullName>MANF/CDNF-like protein</fullName>
    </alternativeName>
</protein>
<proteinExistence type="evidence at transcript level"/>
<dbReference type="EMBL" id="AF132912">
    <property type="protein sequence ID" value="AAD32615.1"/>
    <property type="molecule type" value="mRNA"/>
</dbReference>
<dbReference type="EMBL" id="AE014297">
    <property type="protein sequence ID" value="AAF55303.1"/>
    <property type="molecule type" value="Genomic_DNA"/>
</dbReference>
<dbReference type="EMBL" id="AY061080">
    <property type="protein sequence ID" value="AAL28628.1"/>
    <property type="molecule type" value="mRNA"/>
</dbReference>
<dbReference type="RefSeq" id="NP_477445.1">
    <property type="nucleotide sequence ID" value="NM_058097.6"/>
</dbReference>
<dbReference type="SMR" id="Q9XZ63"/>
<dbReference type="BioGRID" id="67028">
    <property type="interactions" value="4"/>
</dbReference>
<dbReference type="DIP" id="DIP-21713N"/>
<dbReference type="FunCoup" id="Q9XZ63">
    <property type="interactions" value="387"/>
</dbReference>
<dbReference type="IntAct" id="Q9XZ63">
    <property type="interactions" value="1"/>
</dbReference>
<dbReference type="STRING" id="7227.FBpp0082735"/>
<dbReference type="PaxDb" id="7227-FBpp0082735"/>
<dbReference type="DNASU" id="41983"/>
<dbReference type="EnsemblMetazoa" id="FBtr0083283">
    <property type="protein sequence ID" value="FBpp0082735"/>
    <property type="gene ID" value="FBgn0027095"/>
</dbReference>
<dbReference type="GeneID" id="41983"/>
<dbReference type="KEGG" id="dme:Dmel_CG7013"/>
<dbReference type="UCSC" id="CG7013-RA">
    <property type="organism name" value="d. melanogaster"/>
</dbReference>
<dbReference type="AGR" id="FB:FBgn0027095"/>
<dbReference type="CTD" id="7873"/>
<dbReference type="FlyBase" id="FBgn0027095">
    <property type="gene designation" value="Manf"/>
</dbReference>
<dbReference type="VEuPathDB" id="VectorBase:FBgn0027095"/>
<dbReference type="eggNOG" id="KOG4154">
    <property type="taxonomic scope" value="Eukaryota"/>
</dbReference>
<dbReference type="GeneTree" id="ENSGT00390000007160"/>
<dbReference type="HOGENOM" id="CLU_099080_1_0_1"/>
<dbReference type="InParanoid" id="Q9XZ63"/>
<dbReference type="OMA" id="WSMPADK"/>
<dbReference type="OrthoDB" id="5597848at2759"/>
<dbReference type="PhylomeDB" id="Q9XZ63"/>
<dbReference type="Reactome" id="R-DME-114608">
    <property type="pathway name" value="Platelet degranulation"/>
</dbReference>
<dbReference type="BioGRID-ORCS" id="41983">
    <property type="hits" value="0 hits in 3 CRISPR screens"/>
</dbReference>
<dbReference type="ChiTaRS" id="Manf">
    <property type="organism name" value="fly"/>
</dbReference>
<dbReference type="GenomeRNAi" id="41983"/>
<dbReference type="PRO" id="PR:Q9XZ63"/>
<dbReference type="Proteomes" id="UP000000803">
    <property type="component" value="Chromosome 3R"/>
</dbReference>
<dbReference type="Bgee" id="FBgn0027095">
    <property type="expression patterns" value="Expressed in spermatid in male reproductive gland and 200 other cell types or tissues"/>
</dbReference>
<dbReference type="GO" id="GO:0012505">
    <property type="term" value="C:endomembrane system"/>
    <property type="evidence" value="ECO:0007005"/>
    <property type="project" value="FlyBase"/>
</dbReference>
<dbReference type="GO" id="GO:0005783">
    <property type="term" value="C:endoplasmic reticulum"/>
    <property type="evidence" value="ECO:0000314"/>
    <property type="project" value="FlyBase"/>
</dbReference>
<dbReference type="GO" id="GO:0005576">
    <property type="term" value="C:extracellular region"/>
    <property type="evidence" value="ECO:0000314"/>
    <property type="project" value="FlyBase"/>
</dbReference>
<dbReference type="GO" id="GO:0005615">
    <property type="term" value="C:extracellular space"/>
    <property type="evidence" value="ECO:0000318"/>
    <property type="project" value="GO_Central"/>
</dbReference>
<dbReference type="GO" id="GO:0045202">
    <property type="term" value="C:synapse"/>
    <property type="evidence" value="ECO:0007669"/>
    <property type="project" value="GOC"/>
</dbReference>
<dbReference type="GO" id="GO:0042417">
    <property type="term" value="P:dopamine metabolic process"/>
    <property type="evidence" value="ECO:0000315"/>
    <property type="project" value="FlyBase"/>
</dbReference>
<dbReference type="GO" id="GO:0071542">
    <property type="term" value="P:dopaminergic neuron differentiation"/>
    <property type="evidence" value="ECO:0000318"/>
    <property type="project" value="GO_Central"/>
</dbReference>
<dbReference type="GO" id="GO:0070050">
    <property type="term" value="P:neuron cellular homeostasis"/>
    <property type="evidence" value="ECO:0000315"/>
    <property type="project" value="FlyBase"/>
</dbReference>
<dbReference type="GO" id="GO:0031175">
    <property type="term" value="P:neuron projection development"/>
    <property type="evidence" value="ECO:0000315"/>
    <property type="project" value="FlyBase"/>
</dbReference>
<dbReference type="GO" id="GO:0001963">
    <property type="term" value="P:synaptic transmission, dopaminergic"/>
    <property type="evidence" value="ECO:0000315"/>
    <property type="project" value="UniProtKB"/>
</dbReference>
<dbReference type="FunFam" id="1.10.225.10:FF:000003">
    <property type="entry name" value="Mesencephalic astrocyte-derived neurotrophic factor"/>
    <property type="match status" value="1"/>
</dbReference>
<dbReference type="FunFam" id="1.10.720.30:FF:000003">
    <property type="entry name" value="Mesencephalic astrocyte-derived neurotrophic factor"/>
    <property type="match status" value="1"/>
</dbReference>
<dbReference type="Gene3D" id="1.10.720.30">
    <property type="entry name" value="SAP domain"/>
    <property type="match status" value="1"/>
</dbReference>
<dbReference type="Gene3D" id="1.10.225.10">
    <property type="entry name" value="Saposin-like"/>
    <property type="match status" value="1"/>
</dbReference>
<dbReference type="InterPro" id="IPR045333">
    <property type="entry name" value="ARMET-like"/>
</dbReference>
<dbReference type="InterPro" id="IPR019345">
    <property type="entry name" value="ARMET_C"/>
</dbReference>
<dbReference type="InterPro" id="IPR045332">
    <property type="entry name" value="ARMET_N"/>
</dbReference>
<dbReference type="InterPro" id="IPR018247">
    <property type="entry name" value="EF_Hand_1_Ca_BS"/>
</dbReference>
<dbReference type="InterPro" id="IPR036361">
    <property type="entry name" value="SAP_dom_sf"/>
</dbReference>
<dbReference type="PANTHER" id="PTHR12990">
    <property type="entry name" value="ARMET-LIKE PROTEIN"/>
    <property type="match status" value="1"/>
</dbReference>
<dbReference type="PANTHER" id="PTHR12990:SF5">
    <property type="entry name" value="MESENCEPHALIC ASTROCYTE-DERIVED NEUROTROPHIC FACTOR HOMOLOG"/>
    <property type="match status" value="1"/>
</dbReference>
<dbReference type="Pfam" id="PF10208">
    <property type="entry name" value="ARMET_C"/>
    <property type="match status" value="1"/>
</dbReference>
<dbReference type="Pfam" id="PF20145">
    <property type="entry name" value="ARMET_N"/>
    <property type="match status" value="1"/>
</dbReference>
<dbReference type="SUPFAM" id="SSF68906">
    <property type="entry name" value="SAP domain"/>
    <property type="match status" value="1"/>
</dbReference>
<sequence>MKTWYMVVVIGFLATLAQTSLALKEEDCEVCVKTVRRFADSLDDSTKKDYKQIETAFKKFCKAQKNKEHRFCYYLGGLEESATGILNELSKPLSWSMPAEKICEKLKKKDAQICDLRYEKQIDLNSVDLKKLKVRDLKKILNDWDESCDGCLEKGDFIKRIEELKPKYSRSEL</sequence>
<evidence type="ECO:0000250" key="1"/>
<evidence type="ECO:0000255" key="2"/>
<evidence type="ECO:0000269" key="3">
    <source>
    </source>
</evidence>
<evidence type="ECO:0000305" key="4"/>
<reference key="1">
    <citation type="journal article" date="1999" name="Mol. Cells">
        <title>Selection of Drosophila genes encoding secreted and membrane proteins.</title>
        <authorList>
            <person name="Goo J.H."/>
            <person name="Ahn Y."/>
            <person name="Park O.K."/>
            <person name="Park W.J."/>
        </authorList>
    </citation>
    <scope>NUCLEOTIDE SEQUENCE [MRNA]</scope>
    <source>
        <strain>Oregon-R</strain>
    </source>
</reference>
<reference key="2">
    <citation type="journal article" date="2000" name="Science">
        <title>The genome sequence of Drosophila melanogaster.</title>
        <authorList>
            <person name="Adams M.D."/>
            <person name="Celniker S.E."/>
            <person name="Holt R.A."/>
            <person name="Evans C.A."/>
            <person name="Gocayne J.D."/>
            <person name="Amanatides P.G."/>
            <person name="Scherer S.E."/>
            <person name="Li P.W."/>
            <person name="Hoskins R.A."/>
            <person name="Galle R.F."/>
            <person name="George R.A."/>
            <person name="Lewis S.E."/>
            <person name="Richards S."/>
            <person name="Ashburner M."/>
            <person name="Henderson S.N."/>
            <person name="Sutton G.G."/>
            <person name="Wortman J.R."/>
            <person name="Yandell M.D."/>
            <person name="Zhang Q."/>
            <person name="Chen L.X."/>
            <person name="Brandon R.C."/>
            <person name="Rogers Y.-H.C."/>
            <person name="Blazej R.G."/>
            <person name="Champe M."/>
            <person name="Pfeiffer B.D."/>
            <person name="Wan K.H."/>
            <person name="Doyle C."/>
            <person name="Baxter E.G."/>
            <person name="Helt G."/>
            <person name="Nelson C.R."/>
            <person name="Miklos G.L.G."/>
            <person name="Abril J.F."/>
            <person name="Agbayani A."/>
            <person name="An H.-J."/>
            <person name="Andrews-Pfannkoch C."/>
            <person name="Baldwin D."/>
            <person name="Ballew R.M."/>
            <person name="Basu A."/>
            <person name="Baxendale J."/>
            <person name="Bayraktaroglu L."/>
            <person name="Beasley E.M."/>
            <person name="Beeson K.Y."/>
            <person name="Benos P.V."/>
            <person name="Berman B.P."/>
            <person name="Bhandari D."/>
            <person name="Bolshakov S."/>
            <person name="Borkova D."/>
            <person name="Botchan M.R."/>
            <person name="Bouck J."/>
            <person name="Brokstein P."/>
            <person name="Brottier P."/>
            <person name="Burtis K.C."/>
            <person name="Busam D.A."/>
            <person name="Butler H."/>
            <person name="Cadieu E."/>
            <person name="Center A."/>
            <person name="Chandra I."/>
            <person name="Cherry J.M."/>
            <person name="Cawley S."/>
            <person name="Dahlke C."/>
            <person name="Davenport L.B."/>
            <person name="Davies P."/>
            <person name="de Pablos B."/>
            <person name="Delcher A."/>
            <person name="Deng Z."/>
            <person name="Mays A.D."/>
            <person name="Dew I."/>
            <person name="Dietz S.M."/>
            <person name="Dodson K."/>
            <person name="Doup L.E."/>
            <person name="Downes M."/>
            <person name="Dugan-Rocha S."/>
            <person name="Dunkov B.C."/>
            <person name="Dunn P."/>
            <person name="Durbin K.J."/>
            <person name="Evangelista C.C."/>
            <person name="Ferraz C."/>
            <person name="Ferriera S."/>
            <person name="Fleischmann W."/>
            <person name="Fosler C."/>
            <person name="Gabrielian A.E."/>
            <person name="Garg N.S."/>
            <person name="Gelbart W.M."/>
            <person name="Glasser K."/>
            <person name="Glodek A."/>
            <person name="Gong F."/>
            <person name="Gorrell J.H."/>
            <person name="Gu Z."/>
            <person name="Guan P."/>
            <person name="Harris M."/>
            <person name="Harris N.L."/>
            <person name="Harvey D.A."/>
            <person name="Heiman T.J."/>
            <person name="Hernandez J.R."/>
            <person name="Houck J."/>
            <person name="Hostin D."/>
            <person name="Houston K.A."/>
            <person name="Howland T.J."/>
            <person name="Wei M.-H."/>
            <person name="Ibegwam C."/>
            <person name="Jalali M."/>
            <person name="Kalush F."/>
            <person name="Karpen G.H."/>
            <person name="Ke Z."/>
            <person name="Kennison J.A."/>
            <person name="Ketchum K.A."/>
            <person name="Kimmel B.E."/>
            <person name="Kodira C.D."/>
            <person name="Kraft C.L."/>
            <person name="Kravitz S."/>
            <person name="Kulp D."/>
            <person name="Lai Z."/>
            <person name="Lasko P."/>
            <person name="Lei Y."/>
            <person name="Levitsky A.A."/>
            <person name="Li J.H."/>
            <person name="Li Z."/>
            <person name="Liang Y."/>
            <person name="Lin X."/>
            <person name="Liu X."/>
            <person name="Mattei B."/>
            <person name="McIntosh T.C."/>
            <person name="McLeod M.P."/>
            <person name="McPherson D."/>
            <person name="Merkulov G."/>
            <person name="Milshina N.V."/>
            <person name="Mobarry C."/>
            <person name="Morris J."/>
            <person name="Moshrefi A."/>
            <person name="Mount S.M."/>
            <person name="Moy M."/>
            <person name="Murphy B."/>
            <person name="Murphy L."/>
            <person name="Muzny D.M."/>
            <person name="Nelson D.L."/>
            <person name="Nelson D.R."/>
            <person name="Nelson K.A."/>
            <person name="Nixon K."/>
            <person name="Nusskern D.R."/>
            <person name="Pacleb J.M."/>
            <person name="Palazzolo M."/>
            <person name="Pittman G.S."/>
            <person name="Pan S."/>
            <person name="Pollard J."/>
            <person name="Puri V."/>
            <person name="Reese M.G."/>
            <person name="Reinert K."/>
            <person name="Remington K."/>
            <person name="Saunders R.D.C."/>
            <person name="Scheeler F."/>
            <person name="Shen H."/>
            <person name="Shue B.C."/>
            <person name="Siden-Kiamos I."/>
            <person name="Simpson M."/>
            <person name="Skupski M.P."/>
            <person name="Smith T.J."/>
            <person name="Spier E."/>
            <person name="Spradling A.C."/>
            <person name="Stapleton M."/>
            <person name="Strong R."/>
            <person name="Sun E."/>
            <person name="Svirskas R."/>
            <person name="Tector C."/>
            <person name="Turner R."/>
            <person name="Venter E."/>
            <person name="Wang A.H."/>
            <person name="Wang X."/>
            <person name="Wang Z.-Y."/>
            <person name="Wassarman D.A."/>
            <person name="Weinstock G.M."/>
            <person name="Weissenbach J."/>
            <person name="Williams S.M."/>
            <person name="Woodage T."/>
            <person name="Worley K.C."/>
            <person name="Wu D."/>
            <person name="Yang S."/>
            <person name="Yao Q.A."/>
            <person name="Ye J."/>
            <person name="Yeh R.-F."/>
            <person name="Zaveri J.S."/>
            <person name="Zhan M."/>
            <person name="Zhang G."/>
            <person name="Zhao Q."/>
            <person name="Zheng L."/>
            <person name="Zheng X.H."/>
            <person name="Zhong F.N."/>
            <person name="Zhong W."/>
            <person name="Zhou X."/>
            <person name="Zhu S.C."/>
            <person name="Zhu X."/>
            <person name="Smith H.O."/>
            <person name="Gibbs R.A."/>
            <person name="Myers E.W."/>
            <person name="Rubin G.M."/>
            <person name="Venter J.C."/>
        </authorList>
    </citation>
    <scope>NUCLEOTIDE SEQUENCE [LARGE SCALE GENOMIC DNA]</scope>
    <source>
        <strain>Berkeley</strain>
    </source>
</reference>
<reference key="3">
    <citation type="journal article" date="2002" name="Genome Biol.">
        <title>Annotation of the Drosophila melanogaster euchromatic genome: a systematic review.</title>
        <authorList>
            <person name="Misra S."/>
            <person name="Crosby M.A."/>
            <person name="Mungall C.J."/>
            <person name="Matthews B.B."/>
            <person name="Campbell K.S."/>
            <person name="Hradecky P."/>
            <person name="Huang Y."/>
            <person name="Kaminker J.S."/>
            <person name="Millburn G.H."/>
            <person name="Prochnik S.E."/>
            <person name="Smith C.D."/>
            <person name="Tupy J.L."/>
            <person name="Whitfield E.J."/>
            <person name="Bayraktaroglu L."/>
            <person name="Berman B.P."/>
            <person name="Bettencourt B.R."/>
            <person name="Celniker S.E."/>
            <person name="de Grey A.D.N.J."/>
            <person name="Drysdale R.A."/>
            <person name="Harris N.L."/>
            <person name="Richter J."/>
            <person name="Russo S."/>
            <person name="Schroeder A.J."/>
            <person name="Shu S.Q."/>
            <person name="Stapleton M."/>
            <person name="Yamada C."/>
            <person name="Ashburner M."/>
            <person name="Gelbart W.M."/>
            <person name="Rubin G.M."/>
            <person name="Lewis S.E."/>
        </authorList>
    </citation>
    <scope>GENOME REANNOTATION</scope>
    <source>
        <strain>Berkeley</strain>
    </source>
</reference>
<reference key="4">
    <citation type="journal article" date="2002" name="Genome Biol.">
        <title>A Drosophila full-length cDNA resource.</title>
        <authorList>
            <person name="Stapleton M."/>
            <person name="Carlson J.W."/>
            <person name="Brokstein P."/>
            <person name="Yu C."/>
            <person name="Champe M."/>
            <person name="George R.A."/>
            <person name="Guarin H."/>
            <person name="Kronmiller B."/>
            <person name="Pacleb J.M."/>
            <person name="Park S."/>
            <person name="Wan K.H."/>
            <person name="Rubin G.M."/>
            <person name="Celniker S.E."/>
        </authorList>
    </citation>
    <scope>NUCLEOTIDE SEQUENCE [LARGE SCALE MRNA]</scope>
    <source>
        <strain>Berkeley</strain>
        <tissue>Embryo</tissue>
    </source>
</reference>
<reference key="5">
    <citation type="journal article" date="2009" name="Proc. Natl. Acad. Sci. U.S.A.">
        <title>Evidence that DmMANF is an invertebrate neurotrophic factor supporting dopaminergic neurons.</title>
        <authorList>
            <person name="Palgi M."/>
            <person name="Lindstrom R."/>
            <person name="Peranen J."/>
            <person name="Piepponen T.P."/>
            <person name="Saarma M."/>
            <person name="Heino T.I."/>
        </authorList>
    </citation>
    <scope>FUNCTION</scope>
    <scope>SUBCELLULAR LOCATION</scope>
    <scope>TISSUE SPECIFICITY</scope>
    <scope>DEVELOPMENTAL STAGE</scope>
    <scope>DISRUPTION PHENOTYPE</scope>
</reference>
<comment type="function">
    <text evidence="3">Required during the maturation of the embryonic nervous system for maintenance of neuronal and cuticular connectivity. Essential for maintenance of dopaminergic neurons and dopamine levels.</text>
</comment>
<comment type="subcellular location">
    <subcellularLocation>
        <location evidence="3">Secreted</location>
    </subcellularLocation>
</comment>
<comment type="tissue specificity">
    <text evidence="3">In stage 12, expression is seen in the stomodeum and the salivary gland primordia, and weakly in the mesoderm. From stage 13 onward, expression is in Garland cells, the outer wall of the proventriculus and salivary glands. Punctuate expression is also in the ventral nerve cord (VNC), specifically in eagle (eg)-positive cell body glia. Epidermal expression is seen at stage 15.</text>
</comment>
<comment type="developmental stage">
    <text evidence="3">Expressed both maternally and zygotically through all developmental stages.</text>
</comment>
<comment type="disruption phenotype">
    <text evidence="3">Total loss of dopaminergic neurites and drastic reduction in dopamine levels followed by degeneration of axonal bundles in the embryonic central nervous system and subsequent nonapoptotic cell death. Also exhibits cuticular defects.</text>
</comment>
<comment type="similarity">
    <text evidence="4">Belongs to the ARMET family.</text>
</comment>
<keyword id="KW-0217">Developmental protein</keyword>
<keyword id="KW-1015">Disulfide bond</keyword>
<keyword id="KW-1185">Reference proteome</keyword>
<keyword id="KW-0964">Secreted</keyword>
<keyword id="KW-0732">Signal</keyword>
<organism>
    <name type="scientific">Drosophila melanogaster</name>
    <name type="common">Fruit fly</name>
    <dbReference type="NCBI Taxonomy" id="7227"/>
    <lineage>
        <taxon>Eukaryota</taxon>
        <taxon>Metazoa</taxon>
        <taxon>Ecdysozoa</taxon>
        <taxon>Arthropoda</taxon>
        <taxon>Hexapoda</taxon>
        <taxon>Insecta</taxon>
        <taxon>Pterygota</taxon>
        <taxon>Neoptera</taxon>
        <taxon>Endopterygota</taxon>
        <taxon>Diptera</taxon>
        <taxon>Brachycera</taxon>
        <taxon>Muscomorpha</taxon>
        <taxon>Ephydroidea</taxon>
        <taxon>Drosophilidae</taxon>
        <taxon>Drosophila</taxon>
        <taxon>Sophophora</taxon>
    </lineage>
</organism>